<protein>
    <recommendedName>
        <fullName>Protein MobC</fullName>
    </recommendedName>
</protein>
<sequence length="118" mass="12956">MKYTTEQLEAIASKLRDMPQVEKKKQEHSKQEAVRVLSKEIAALQKRGYTLDQISETLRGEGLSIATPTLKSYLQRAKPTKKAPVQAPGDTPPPAPAVKKPADTSKATFTPKPDSDDI</sequence>
<name>MOBC_ACIFR</name>
<accession>P22899</accession>
<organism>
    <name type="scientific">Acidithiobacillus ferrooxidans</name>
    <name type="common">Thiobacillus ferrooxidans</name>
    <dbReference type="NCBI Taxonomy" id="920"/>
    <lineage>
        <taxon>Bacteria</taxon>
        <taxon>Pseudomonadati</taxon>
        <taxon>Pseudomonadota</taxon>
        <taxon>Acidithiobacillia</taxon>
        <taxon>Acidithiobacillales</taxon>
        <taxon>Acidithiobacillaceae</taxon>
        <taxon>Acidithiobacillus</taxon>
    </lineage>
</organism>
<evidence type="ECO:0000256" key="1">
    <source>
        <dbReference type="SAM" id="MobiDB-lite"/>
    </source>
</evidence>
<keyword id="KW-0614">Plasmid</keyword>
<dbReference type="EMBL" id="M57717">
    <property type="protein sequence ID" value="AAA27390.1"/>
    <property type="molecule type" value="Genomic_DNA"/>
</dbReference>
<dbReference type="PIR" id="C43256">
    <property type="entry name" value="C43256"/>
</dbReference>
<dbReference type="SMR" id="P22899"/>
<feature type="chain" id="PRO_0000068397" description="Protein MobC">
    <location>
        <begin position="1"/>
        <end position="118"/>
    </location>
</feature>
<feature type="region of interest" description="Disordered" evidence="1">
    <location>
        <begin position="75"/>
        <end position="118"/>
    </location>
</feature>
<geneLocation type="plasmid">
    <name>pTF-FC2</name>
</geneLocation>
<proteinExistence type="predicted"/>
<gene>
    <name type="primary">mobC</name>
</gene>
<reference key="1">
    <citation type="journal article" date="1992" name="J. Bacteriol.">
        <title>Sequence analysis and characterization of the mobilization region of a broad-host-range plasmid, pTF-FC2, isolated from Thiobacillus ferrooxidans.</title>
        <authorList>
            <person name="Rohrer J."/>
            <person name="Rawlings D.E."/>
        </authorList>
    </citation>
    <scope>NUCLEOTIDE SEQUENCE [GENOMIC DNA]</scope>
</reference>